<gene>
    <name evidence="1" type="primary">rpmH</name>
    <name type="ordered locus">PHZ_c0392</name>
</gene>
<accession>B4RDV7</accession>
<proteinExistence type="inferred from homology"/>
<name>RL34_PHEZH</name>
<feature type="chain" id="PRO_1000196083" description="Large ribosomal subunit protein bL34">
    <location>
        <begin position="1"/>
        <end position="44"/>
    </location>
</feature>
<feature type="region of interest" description="Disordered" evidence="2">
    <location>
        <begin position="25"/>
        <end position="44"/>
    </location>
</feature>
<feature type="compositionally biased region" description="Basic residues" evidence="2">
    <location>
        <begin position="31"/>
        <end position="44"/>
    </location>
</feature>
<reference key="1">
    <citation type="journal article" date="2008" name="BMC Genomics">
        <title>Complete genome of Phenylobacterium zucineum - a novel facultative intracellular bacterium isolated from human erythroleukemia cell line K562.</title>
        <authorList>
            <person name="Luo Y."/>
            <person name="Xu X."/>
            <person name="Ding Z."/>
            <person name="Liu Z."/>
            <person name="Zhang B."/>
            <person name="Yan Z."/>
            <person name="Sun J."/>
            <person name="Hu S."/>
            <person name="Hu X."/>
        </authorList>
    </citation>
    <scope>NUCLEOTIDE SEQUENCE [LARGE SCALE GENOMIC DNA]</scope>
    <source>
        <strain>HLK1</strain>
    </source>
</reference>
<keyword id="KW-1185">Reference proteome</keyword>
<keyword id="KW-0687">Ribonucleoprotein</keyword>
<keyword id="KW-0689">Ribosomal protein</keyword>
<sequence>MKRTFQPSRLVRKRRHGFRLRMSTKNGQKILARRRAKGRKRLSA</sequence>
<comment type="similarity">
    <text evidence="1">Belongs to the bacterial ribosomal protein bL34 family.</text>
</comment>
<organism>
    <name type="scientific">Phenylobacterium zucineum (strain HLK1)</name>
    <dbReference type="NCBI Taxonomy" id="450851"/>
    <lineage>
        <taxon>Bacteria</taxon>
        <taxon>Pseudomonadati</taxon>
        <taxon>Pseudomonadota</taxon>
        <taxon>Alphaproteobacteria</taxon>
        <taxon>Caulobacterales</taxon>
        <taxon>Caulobacteraceae</taxon>
        <taxon>Phenylobacterium</taxon>
    </lineage>
</organism>
<protein>
    <recommendedName>
        <fullName evidence="1">Large ribosomal subunit protein bL34</fullName>
    </recommendedName>
    <alternativeName>
        <fullName evidence="3">50S ribosomal protein L34</fullName>
    </alternativeName>
</protein>
<evidence type="ECO:0000255" key="1">
    <source>
        <dbReference type="HAMAP-Rule" id="MF_00391"/>
    </source>
</evidence>
<evidence type="ECO:0000256" key="2">
    <source>
        <dbReference type="SAM" id="MobiDB-lite"/>
    </source>
</evidence>
<evidence type="ECO:0000305" key="3"/>
<dbReference type="EMBL" id="CP000747">
    <property type="protein sequence ID" value="ACG76806.1"/>
    <property type="molecule type" value="Genomic_DNA"/>
</dbReference>
<dbReference type="RefSeq" id="WP_012520954.1">
    <property type="nucleotide sequence ID" value="NC_011144.1"/>
</dbReference>
<dbReference type="SMR" id="B4RDV7"/>
<dbReference type="STRING" id="450851.PHZ_c0392"/>
<dbReference type="KEGG" id="pzu:PHZ_c0392"/>
<dbReference type="eggNOG" id="COG0230">
    <property type="taxonomic scope" value="Bacteria"/>
</dbReference>
<dbReference type="HOGENOM" id="CLU_129938_2_0_5"/>
<dbReference type="OrthoDB" id="9804164at2"/>
<dbReference type="Proteomes" id="UP000001868">
    <property type="component" value="Chromosome"/>
</dbReference>
<dbReference type="GO" id="GO:1990904">
    <property type="term" value="C:ribonucleoprotein complex"/>
    <property type="evidence" value="ECO:0007669"/>
    <property type="project" value="UniProtKB-KW"/>
</dbReference>
<dbReference type="GO" id="GO:0005840">
    <property type="term" value="C:ribosome"/>
    <property type="evidence" value="ECO:0007669"/>
    <property type="project" value="UniProtKB-KW"/>
</dbReference>
<dbReference type="GO" id="GO:0003735">
    <property type="term" value="F:structural constituent of ribosome"/>
    <property type="evidence" value="ECO:0007669"/>
    <property type="project" value="InterPro"/>
</dbReference>
<dbReference type="GO" id="GO:0006412">
    <property type="term" value="P:translation"/>
    <property type="evidence" value="ECO:0007669"/>
    <property type="project" value="UniProtKB-UniRule"/>
</dbReference>
<dbReference type="FunFam" id="1.10.287.3980:FF:000001">
    <property type="entry name" value="Mitochondrial ribosomal protein L34"/>
    <property type="match status" value="1"/>
</dbReference>
<dbReference type="Gene3D" id="1.10.287.3980">
    <property type="match status" value="1"/>
</dbReference>
<dbReference type="HAMAP" id="MF_00391">
    <property type="entry name" value="Ribosomal_bL34"/>
    <property type="match status" value="1"/>
</dbReference>
<dbReference type="InterPro" id="IPR000271">
    <property type="entry name" value="Ribosomal_bL34"/>
</dbReference>
<dbReference type="InterPro" id="IPR020939">
    <property type="entry name" value="Ribosomal_bL34_CS"/>
</dbReference>
<dbReference type="NCBIfam" id="TIGR01030">
    <property type="entry name" value="rpmH_bact"/>
    <property type="match status" value="1"/>
</dbReference>
<dbReference type="PANTHER" id="PTHR14503:SF4">
    <property type="entry name" value="LARGE RIBOSOMAL SUBUNIT PROTEIN BL34M"/>
    <property type="match status" value="1"/>
</dbReference>
<dbReference type="PANTHER" id="PTHR14503">
    <property type="entry name" value="MITOCHONDRIAL RIBOSOMAL PROTEIN 34 FAMILY MEMBER"/>
    <property type="match status" value="1"/>
</dbReference>
<dbReference type="Pfam" id="PF00468">
    <property type="entry name" value="Ribosomal_L34"/>
    <property type="match status" value="1"/>
</dbReference>
<dbReference type="PROSITE" id="PS00784">
    <property type="entry name" value="RIBOSOMAL_L34"/>
    <property type="match status" value="1"/>
</dbReference>